<protein>
    <recommendedName>
        <fullName>Pyridoxal 5'-phosphate synthase subunit SNZ1</fullName>
        <shortName>PLP synthase subunit SNZ1</shortName>
        <ecNumber evidence="4 5">4.3.3.6</ecNumber>
    </recommendedName>
    <alternativeName>
        <fullName>PDX1 homolog 1</fullName>
        <shortName>Pdx1.1</shortName>
    </alternativeName>
    <alternativeName>
        <fullName>p35</fullName>
    </alternativeName>
</protein>
<keyword id="KW-0002">3D-structure</keyword>
<keyword id="KW-0903">Direct protein sequencing</keyword>
<keyword id="KW-0456">Lyase</keyword>
<keyword id="KW-0663">Pyridoxal phosphate</keyword>
<keyword id="KW-1185">Reference proteome</keyword>
<keyword id="KW-0704">Schiff base</keyword>
<feature type="chain" id="PRO_0000109358" description="Pyridoxal 5'-phosphate synthase subunit SNZ1">
    <location>
        <begin position="1"/>
        <end position="297"/>
    </location>
</feature>
<feature type="active site" description="Schiff-base intermediate with D-ribose 5-phosphate" evidence="1">
    <location>
        <position position="80"/>
    </location>
</feature>
<feature type="binding site" evidence="1">
    <location>
        <position position="23"/>
    </location>
    <ligand>
        <name>D-ribose 5-phosphate</name>
        <dbReference type="ChEBI" id="CHEBI:78346"/>
    </ligand>
</feature>
<feature type="binding site" evidence="1">
    <location>
        <position position="152"/>
    </location>
    <ligand>
        <name>D-ribose 5-phosphate</name>
        <dbReference type="ChEBI" id="CHEBI:78346"/>
    </ligand>
</feature>
<feature type="binding site" evidence="5">
    <location>
        <position position="164"/>
    </location>
    <ligand>
        <name>D-glyceraldehyde 3-phosphate</name>
        <dbReference type="ChEBI" id="CHEBI:59776"/>
    </ligand>
</feature>
<feature type="binding site" evidence="1">
    <location>
        <position position="214"/>
    </location>
    <ligand>
        <name>D-ribose 5-phosphate</name>
        <dbReference type="ChEBI" id="CHEBI:78346"/>
    </ligand>
</feature>
<feature type="binding site" evidence="1">
    <location>
        <begin position="235"/>
        <end position="236"/>
    </location>
    <ligand>
        <name>D-ribose 5-phosphate</name>
        <dbReference type="ChEBI" id="CHEBI:78346"/>
    </ligand>
</feature>
<feature type="mutagenesis site" description="No effect." evidence="5">
    <original>E</original>
    <variation>A</variation>
    <location>
        <position position="116"/>
    </location>
</feature>
<feature type="mutagenesis site" description="No activity." evidence="5">
    <original>K</original>
    <variation>A</variation>
    <location>
        <position position="117"/>
    </location>
</feature>
<feature type="mutagenesis site" description="No pyridoxal 5'-phosphate synthesis activity. Retains ability to isomerize dihydroxyacetone phosphate to glyceraldehyde 3-phosphate." evidence="5">
    <original>RR</original>
    <variation>AA</variation>
    <location>
        <begin position="136"/>
        <end position="137"/>
    </location>
</feature>
<feature type="mutagenesis site" description="No activity." evidence="5">
    <original>K</original>
    <variation>A</variation>
    <location>
        <position position="148"/>
    </location>
</feature>
<feature type="mutagenesis site" description="No pyridoxal 5'-phosphate synthesis activity. Retains ability to isomerize dihydroxyacetone phosphate to glyceraldehyde 3-phosphate." evidence="5">
    <original>R</original>
    <variation>A</variation>
    <location>
        <position position="164"/>
    </location>
</feature>
<feature type="mutagenesis site" description="No effect." evidence="5">
    <original>K</original>
    <variation>A</variation>
    <location>
        <position position="240"/>
    </location>
</feature>
<feature type="helix" evidence="7">
    <location>
        <begin position="4"/>
        <end position="14"/>
    </location>
</feature>
<feature type="turn" evidence="7">
    <location>
        <begin position="15"/>
        <end position="18"/>
    </location>
</feature>
<feature type="strand" evidence="9">
    <location>
        <begin position="20"/>
        <end position="26"/>
    </location>
</feature>
<feature type="helix" evidence="9">
    <location>
        <begin position="27"/>
        <end position="36"/>
    </location>
</feature>
<feature type="strand" evidence="9">
    <location>
        <begin position="39"/>
        <end position="43"/>
    </location>
</feature>
<feature type="helix" evidence="9">
    <location>
        <begin position="48"/>
        <end position="52"/>
    </location>
</feature>
<feature type="turn" evidence="9">
    <location>
        <begin position="53"/>
        <end position="55"/>
    </location>
</feature>
<feature type="helix" evidence="9">
    <location>
        <begin position="63"/>
        <end position="70"/>
    </location>
</feature>
<feature type="strand" evidence="9">
    <location>
        <begin position="77"/>
        <end position="82"/>
    </location>
</feature>
<feature type="helix" evidence="9">
    <location>
        <begin position="86"/>
        <end position="94"/>
    </location>
</feature>
<feature type="strand" evidence="9">
    <location>
        <begin position="98"/>
        <end position="103"/>
    </location>
</feature>
<feature type="helix" evidence="9">
    <location>
        <begin position="117"/>
        <end position="119"/>
    </location>
</feature>
<feature type="strand" evidence="9">
    <location>
        <begin position="124"/>
        <end position="130"/>
    </location>
</feature>
<feature type="helix" evidence="9">
    <location>
        <begin position="131"/>
        <end position="140"/>
    </location>
</feature>
<feature type="strand" evidence="9">
    <location>
        <begin position="143"/>
        <end position="147"/>
    </location>
</feature>
<feature type="strand" evidence="8">
    <location>
        <begin position="151"/>
        <end position="153"/>
    </location>
</feature>
<feature type="helix" evidence="9">
    <location>
        <begin position="157"/>
        <end position="174"/>
    </location>
</feature>
<feature type="helix" evidence="9">
    <location>
        <begin position="179"/>
        <end position="189"/>
    </location>
</feature>
<feature type="helix" evidence="9">
    <location>
        <begin position="193"/>
        <end position="202"/>
    </location>
</feature>
<feature type="strand" evidence="9">
    <location>
        <begin position="209"/>
        <end position="211"/>
    </location>
</feature>
<feature type="helix" evidence="9">
    <location>
        <begin position="218"/>
        <end position="226"/>
    </location>
</feature>
<feature type="strand" evidence="9">
    <location>
        <begin position="232"/>
        <end position="234"/>
    </location>
</feature>
<feature type="helix" evidence="9">
    <location>
        <begin position="236"/>
        <end position="240"/>
    </location>
</feature>
<feature type="strand" evidence="7">
    <location>
        <begin position="241"/>
        <end position="243"/>
    </location>
</feature>
<feature type="helix" evidence="9">
    <location>
        <begin position="244"/>
        <end position="256"/>
    </location>
</feature>
<feature type="turn" evidence="9">
    <location>
        <begin position="257"/>
        <end position="259"/>
    </location>
</feature>
<feature type="helix" evidence="9">
    <location>
        <begin position="261"/>
        <end position="268"/>
    </location>
</feature>
<feature type="helix" evidence="7">
    <location>
        <begin position="280"/>
        <end position="282"/>
    </location>
</feature>
<accession>Q03148</accession>
<accession>D6VZR9</accession>
<gene>
    <name type="primary">SNZ1</name>
    <name type="ordered locus">YMR096W</name>
    <name type="ORF">YM6543.03</name>
</gene>
<comment type="function">
    <text evidence="2 3 4">Catalyzes the formation of pyridoxal 5'-phosphate from ribose 5-phosphate (RBP), glyceraldehyde 3-phosphate (G3P) and ammonia. The ammonia is provided by a SNO isoform. Can also use ribulose 5-phosphate and dihydroxyacetone phosphate as substrates, resulting from enzyme-catalyzed isomerization of RBP and G3P, respectively.</text>
</comment>
<comment type="catalytic activity">
    <reaction evidence="4 5">
        <text>aldehydo-D-ribose 5-phosphate + D-glyceraldehyde 3-phosphate + L-glutamine = pyridoxal 5'-phosphate + L-glutamate + phosphate + 3 H2O + H(+)</text>
        <dbReference type="Rhea" id="RHEA:31507"/>
        <dbReference type="ChEBI" id="CHEBI:15377"/>
        <dbReference type="ChEBI" id="CHEBI:15378"/>
        <dbReference type="ChEBI" id="CHEBI:29985"/>
        <dbReference type="ChEBI" id="CHEBI:43474"/>
        <dbReference type="ChEBI" id="CHEBI:58273"/>
        <dbReference type="ChEBI" id="CHEBI:58359"/>
        <dbReference type="ChEBI" id="CHEBI:59776"/>
        <dbReference type="ChEBI" id="CHEBI:597326"/>
        <dbReference type="EC" id="4.3.3.6"/>
    </reaction>
</comment>
<comment type="biophysicochemical properties">
    <kinetics>
        <KM evidence="4">0.11 mM for ribose 5-phosphate</KM>
        <KM evidence="4">0.3 mM for glyceraldehyde 3-phosphate</KM>
        <Vmax evidence="4">1.45 nmol/min/mg enzyme with ribose 5-phosphate as substrate</Vmax>
        <Vmax evidence="4">1.54 nmol/min/mg enzyme with glyceraldehyde 3-phosphate as substrate</Vmax>
    </kinetics>
</comment>
<comment type="pathway">
    <text>Cofactor biosynthesis; pyridoxal 5'-phosphate biosynthesis.</text>
</comment>
<comment type="subunit">
    <text evidence="2 4">Homohexamer (PubMed:19523954). Interacts with AIM18 (PubMed:12271461).</text>
</comment>
<comment type="interaction">
    <interactant intactId="EBI-17618">
        <id>Q03148</id>
    </interactant>
    <interactant intactId="EBI-28190">
        <id>Q03144</id>
        <label>SNO1</label>
    </interactant>
    <organismsDiffer>false</organismsDiffer>
    <experiments>4</experiments>
</comment>
<comment type="developmental stage">
    <text>Shows increased synthesis after entry into stationary phase.</text>
</comment>
<comment type="disruption phenotype">
    <text evidence="2">Defects cause some sensibility to 6-azauracil, an inhibitor of purine and pyrimidine biosynthetic enzymes, and methylene blue, a producer of singlet oxygen. These effects are probably due to the inability to synthesize pyridoxal 5'-phosphate.</text>
</comment>
<comment type="similarity">
    <text evidence="6">Belongs to the PdxS/SNZ family.</text>
</comment>
<organism>
    <name type="scientific">Saccharomyces cerevisiae (strain ATCC 204508 / S288c)</name>
    <name type="common">Baker's yeast</name>
    <dbReference type="NCBI Taxonomy" id="559292"/>
    <lineage>
        <taxon>Eukaryota</taxon>
        <taxon>Fungi</taxon>
        <taxon>Dikarya</taxon>
        <taxon>Ascomycota</taxon>
        <taxon>Saccharomycotina</taxon>
        <taxon>Saccharomycetes</taxon>
        <taxon>Saccharomycetales</taxon>
        <taxon>Saccharomycetaceae</taxon>
        <taxon>Saccharomyces</taxon>
    </lineage>
</organism>
<dbReference type="EC" id="4.3.3.6" evidence="4 5"/>
<dbReference type="EMBL" id="Z49807">
    <property type="protein sequence ID" value="CAA89897.1"/>
    <property type="molecule type" value="Genomic_DNA"/>
</dbReference>
<dbReference type="EMBL" id="BK006946">
    <property type="protein sequence ID" value="DAA09993.1"/>
    <property type="molecule type" value="Genomic_DNA"/>
</dbReference>
<dbReference type="PIR" id="S55082">
    <property type="entry name" value="S55082"/>
</dbReference>
<dbReference type="RefSeq" id="NP_013814.1">
    <property type="nucleotide sequence ID" value="NM_001182596.1"/>
</dbReference>
<dbReference type="PDB" id="3FEM">
    <property type="method" value="X-ray"/>
    <property type="resolution" value="3.02 A"/>
    <property type="chains" value="A/B/C/D/E/F=1-297"/>
</dbReference>
<dbReference type="PDB" id="3O05">
    <property type="method" value="X-ray"/>
    <property type="resolution" value="2.20 A"/>
    <property type="chains" value="A/B/C=15-297"/>
</dbReference>
<dbReference type="PDB" id="3O06">
    <property type="method" value="X-ray"/>
    <property type="resolution" value="2.35 A"/>
    <property type="chains" value="A/B/C=15-297"/>
</dbReference>
<dbReference type="PDB" id="3O07">
    <property type="method" value="X-ray"/>
    <property type="resolution" value="1.80 A"/>
    <property type="chains" value="A/B/C=15-297"/>
</dbReference>
<dbReference type="PDBsum" id="3FEM"/>
<dbReference type="PDBsum" id="3O05"/>
<dbReference type="PDBsum" id="3O06"/>
<dbReference type="PDBsum" id="3O07"/>
<dbReference type="SMR" id="Q03148"/>
<dbReference type="BioGRID" id="35271">
    <property type="interactions" value="109"/>
</dbReference>
<dbReference type="ComplexPortal" id="CPX-1370">
    <property type="entry name" value="SNO1-SNZ1 pyridoxal 5'-phosphate synthase complex"/>
</dbReference>
<dbReference type="ComplexPortal" id="CPX-1371">
    <property type="entry name" value="SNO2-SNZ1 pyridoxal 5'-phosphate synthase complex"/>
</dbReference>
<dbReference type="DIP" id="DIP-1643N"/>
<dbReference type="FunCoup" id="Q03148">
    <property type="interactions" value="283"/>
</dbReference>
<dbReference type="IntAct" id="Q03148">
    <property type="interactions" value="9"/>
</dbReference>
<dbReference type="MINT" id="Q03148"/>
<dbReference type="STRING" id="4932.YMR096W"/>
<dbReference type="iPTMnet" id="Q03148"/>
<dbReference type="PaxDb" id="4932-YMR096W"/>
<dbReference type="PeptideAtlas" id="Q03148"/>
<dbReference type="EnsemblFungi" id="YMR096W_mRNA">
    <property type="protein sequence ID" value="YMR096W"/>
    <property type="gene ID" value="YMR096W"/>
</dbReference>
<dbReference type="GeneID" id="855121"/>
<dbReference type="KEGG" id="sce:YMR096W"/>
<dbReference type="AGR" id="SGD:S000004702"/>
<dbReference type="SGD" id="S000004702">
    <property type="gene designation" value="SNZ1"/>
</dbReference>
<dbReference type="VEuPathDB" id="FungiDB:YMR096W"/>
<dbReference type="eggNOG" id="KOG1606">
    <property type="taxonomic scope" value="Eukaryota"/>
</dbReference>
<dbReference type="GeneTree" id="ENSGT00390000018460"/>
<dbReference type="HOGENOM" id="CLU_055352_1_0_1"/>
<dbReference type="InParanoid" id="Q03148"/>
<dbReference type="OMA" id="EKGFNSY"/>
<dbReference type="OrthoDB" id="1660966at2759"/>
<dbReference type="BioCyc" id="MetaCyc:G3O-32796-MONOMER"/>
<dbReference type="BioCyc" id="YEAST:G3O-32796-MONOMER"/>
<dbReference type="BRENDA" id="4.3.3.6">
    <property type="organism ID" value="984"/>
</dbReference>
<dbReference type="SABIO-RK" id="Q03148"/>
<dbReference type="UniPathway" id="UPA00245"/>
<dbReference type="BioGRID-ORCS" id="855121">
    <property type="hits" value="0 hits in 10 CRISPR screens"/>
</dbReference>
<dbReference type="EvolutionaryTrace" id="Q03148"/>
<dbReference type="PRO" id="PR:Q03148"/>
<dbReference type="Proteomes" id="UP000002311">
    <property type="component" value="Chromosome XIII"/>
</dbReference>
<dbReference type="RNAct" id="Q03148">
    <property type="molecule type" value="protein"/>
</dbReference>
<dbReference type="GO" id="GO:1903600">
    <property type="term" value="C:glutaminase complex"/>
    <property type="evidence" value="ECO:0000353"/>
    <property type="project" value="ComplexPortal"/>
</dbReference>
<dbReference type="GO" id="GO:0016843">
    <property type="term" value="F:amine-lyase activity"/>
    <property type="evidence" value="ECO:0000318"/>
    <property type="project" value="GO_Central"/>
</dbReference>
<dbReference type="GO" id="GO:0036381">
    <property type="term" value="F:pyridoxal 5'-phosphate synthase (glutamine hydrolysing) activity"/>
    <property type="evidence" value="ECO:0000314"/>
    <property type="project" value="SGD"/>
</dbReference>
<dbReference type="GO" id="GO:0006520">
    <property type="term" value="P:amino acid metabolic process"/>
    <property type="evidence" value="ECO:0000318"/>
    <property type="project" value="GO_Central"/>
</dbReference>
<dbReference type="GO" id="GO:0006543">
    <property type="term" value="P:glutamine catabolic process"/>
    <property type="evidence" value="ECO:0000314"/>
    <property type="project" value="ComplexPortal"/>
</dbReference>
<dbReference type="GO" id="GO:0042823">
    <property type="term" value="P:pyridoxal phosphate biosynthetic process"/>
    <property type="evidence" value="ECO:0000314"/>
    <property type="project" value="ComplexPortal"/>
</dbReference>
<dbReference type="GO" id="GO:0008615">
    <property type="term" value="P:pyridoxine biosynthetic process"/>
    <property type="evidence" value="ECO:0000315"/>
    <property type="project" value="SGD"/>
</dbReference>
<dbReference type="GO" id="GO:0042819">
    <property type="term" value="P:vitamin B6 biosynthetic process"/>
    <property type="evidence" value="ECO:0000315"/>
    <property type="project" value="SGD"/>
</dbReference>
<dbReference type="CDD" id="cd04727">
    <property type="entry name" value="pdxS"/>
    <property type="match status" value="1"/>
</dbReference>
<dbReference type="FunFam" id="3.20.20.70:FF:000001">
    <property type="entry name" value="Pyridoxine biosynthesis protein PDX1"/>
    <property type="match status" value="1"/>
</dbReference>
<dbReference type="Gene3D" id="3.20.20.70">
    <property type="entry name" value="Aldolase class I"/>
    <property type="match status" value="1"/>
</dbReference>
<dbReference type="HAMAP" id="MF_01824">
    <property type="entry name" value="PdxS"/>
    <property type="match status" value="1"/>
</dbReference>
<dbReference type="InterPro" id="IPR013785">
    <property type="entry name" value="Aldolase_TIM"/>
</dbReference>
<dbReference type="InterPro" id="IPR001852">
    <property type="entry name" value="PdxS/SNZ"/>
</dbReference>
<dbReference type="InterPro" id="IPR033755">
    <property type="entry name" value="PdxS/SNZ_N"/>
</dbReference>
<dbReference type="InterPro" id="IPR011060">
    <property type="entry name" value="RibuloseP-bd_barrel"/>
</dbReference>
<dbReference type="NCBIfam" id="NF003215">
    <property type="entry name" value="PRK04180.1"/>
    <property type="match status" value="1"/>
</dbReference>
<dbReference type="NCBIfam" id="TIGR00343">
    <property type="entry name" value="pyridoxal 5'-phosphate synthase lyase subunit PdxS"/>
    <property type="match status" value="1"/>
</dbReference>
<dbReference type="PANTHER" id="PTHR31829">
    <property type="entry name" value="PYRIDOXAL 5'-PHOSPHATE SYNTHASE SUBUNIT SNZ1-RELATED"/>
    <property type="match status" value="1"/>
</dbReference>
<dbReference type="PANTHER" id="PTHR31829:SF0">
    <property type="entry name" value="PYRIDOXAL 5'-PHOSPHATE SYNTHASE SUBUNIT SNZ1-RELATED"/>
    <property type="match status" value="1"/>
</dbReference>
<dbReference type="Pfam" id="PF01680">
    <property type="entry name" value="SOR_SNZ"/>
    <property type="match status" value="1"/>
</dbReference>
<dbReference type="PIRSF" id="PIRSF029271">
    <property type="entry name" value="Pdx1"/>
    <property type="match status" value="1"/>
</dbReference>
<dbReference type="SUPFAM" id="SSF51366">
    <property type="entry name" value="Ribulose-phoshate binding barrel"/>
    <property type="match status" value="1"/>
</dbReference>
<dbReference type="PROSITE" id="PS01235">
    <property type="entry name" value="PDXS_SNZ_1"/>
    <property type="match status" value="1"/>
</dbReference>
<dbReference type="PROSITE" id="PS51129">
    <property type="entry name" value="PDXS_SNZ_2"/>
    <property type="match status" value="1"/>
</dbReference>
<proteinExistence type="evidence at protein level"/>
<reference key="1">
    <citation type="journal article" date="1997" name="Nature">
        <title>The nucleotide sequence of Saccharomyces cerevisiae chromosome XIII.</title>
        <authorList>
            <person name="Bowman S."/>
            <person name="Churcher C.M."/>
            <person name="Badcock K."/>
            <person name="Brown D."/>
            <person name="Chillingworth T."/>
            <person name="Connor R."/>
            <person name="Dedman K."/>
            <person name="Devlin K."/>
            <person name="Gentles S."/>
            <person name="Hamlin N."/>
            <person name="Hunt S."/>
            <person name="Jagels K."/>
            <person name="Lye G."/>
            <person name="Moule S."/>
            <person name="Odell C."/>
            <person name="Pearson D."/>
            <person name="Rajandream M.A."/>
            <person name="Rice P."/>
            <person name="Skelton J."/>
            <person name="Walsh S.V."/>
            <person name="Whitehead S."/>
            <person name="Barrell B.G."/>
        </authorList>
    </citation>
    <scope>NUCLEOTIDE SEQUENCE [LARGE SCALE GENOMIC DNA]</scope>
    <source>
        <strain>ATCC 204508 / S288c</strain>
    </source>
</reference>
<reference key="2">
    <citation type="journal article" date="2014" name="G3 (Bethesda)">
        <title>The reference genome sequence of Saccharomyces cerevisiae: Then and now.</title>
        <authorList>
            <person name="Engel S.R."/>
            <person name="Dietrich F.S."/>
            <person name="Fisk D.G."/>
            <person name="Binkley G."/>
            <person name="Balakrishnan R."/>
            <person name="Costanzo M.C."/>
            <person name="Dwight S.S."/>
            <person name="Hitz B.C."/>
            <person name="Karra K."/>
            <person name="Nash R.S."/>
            <person name="Weng S."/>
            <person name="Wong E.D."/>
            <person name="Lloyd P."/>
            <person name="Skrzypek M.S."/>
            <person name="Miyasato S.R."/>
            <person name="Simison M."/>
            <person name="Cherry J.M."/>
        </authorList>
    </citation>
    <scope>GENOME REANNOTATION</scope>
    <source>
        <strain>ATCC 204508 / S288c</strain>
    </source>
</reference>
<reference key="3">
    <citation type="journal article" date="2004" name="Eur. J. Biochem.">
        <title>Characterization of the products of the genes SNO1 and SNZ1 involved in pyridoxine synthesis in Saccharomyces cerevisiae.</title>
        <authorList>
            <person name="Dong Y.X."/>
            <person name="Sueda S."/>
            <person name="Nikawa J."/>
            <person name="Kondo H."/>
        </authorList>
    </citation>
    <scope>PROTEIN SEQUENCE OF 1-10</scope>
</reference>
<reference key="4">
    <citation type="journal article" date="1996" name="J. Bacteriol.">
        <title>A stationary-phase gene in Saccharomyces cerevisiae is a member of a novel, highly conserved gene family.</title>
        <authorList>
            <person name="Braun E.L."/>
            <person name="Fuge E.K."/>
            <person name="Padilla P.A."/>
            <person name="Werner-Washburne M."/>
        </authorList>
    </citation>
    <scope>IDENTIFICATION</scope>
</reference>
<reference key="5">
    <citation type="journal article" date="1998" name="J. Bacteriol.">
        <title>The highly conserved, coregulated SNO and SNZ gene families in Saccharomyces cerevisiae respond to nutrient limitation.</title>
        <authorList>
            <person name="Padilla P.A."/>
            <person name="Fuge E.K."/>
            <person name="Crawford M.E."/>
            <person name="Errett A."/>
            <person name="Werner-Washburne M."/>
        </authorList>
    </citation>
    <scope>INDUCTION</scope>
</reference>
<reference key="6">
    <citation type="journal article" date="1998" name="J. Bacteriol.">
        <authorList>
            <person name="Padilla P.A."/>
            <person name="Fuge E.K."/>
            <person name="Crawford M.E."/>
            <person name="Errett A."/>
            <person name="Werner-Washburne M."/>
        </authorList>
    </citation>
    <scope>ERRATUM OF PUBMED:9791124</scope>
</reference>
<reference key="7">
    <citation type="journal article" date="2002" name="Yeast">
        <title>Functional analysis of yeast gene families involved in metabolism of vitamins B1 and B6.</title>
        <authorList>
            <person name="Rodriguez-Navarro S."/>
            <person name="Llorente B."/>
            <person name="Rodriguez-Manzaneque M.T."/>
            <person name="Ramne A."/>
            <person name="Uber G."/>
            <person name="Marchesan D."/>
            <person name="Dujon B."/>
            <person name="Herrero E."/>
            <person name="Sunnerhagen P."/>
            <person name="Perez-Ortin J.E."/>
        </authorList>
    </citation>
    <scope>FUNCTION</scope>
    <scope>INTERACTION WITH FMP22</scope>
    <scope>DISRUPTION PHENOTYPE</scope>
</reference>
<reference key="8">
    <citation type="journal article" date="2003" name="J. Biol. Chem.">
        <title>Tpn1p, the plasma membrane vitamin B6 transporter of Saccharomyces cerevisiae.</title>
        <authorList>
            <person name="Stolz J."/>
            <person name="Vielreicher M."/>
        </authorList>
    </citation>
    <scope>FUNCTION</scope>
</reference>
<reference key="9">
    <citation type="journal article" date="2009" name="FEBS Lett.">
        <title>X-ray crystal structure of Saccharomyces cerevisiae Pdx1 provides insights into the oligomeric nature of PLP synthases.</title>
        <authorList>
            <person name="Neuwirth M."/>
            <person name="Strohmeier M."/>
            <person name="Windeisen V."/>
            <person name="Wallner S."/>
            <person name="Deller S."/>
            <person name="Rippe K."/>
            <person name="Sinning I."/>
            <person name="Macheroux P."/>
            <person name="Tews I."/>
        </authorList>
    </citation>
    <scope>X-RAY CRYSTALLOGRAPHY (3.02 ANGSTROMS)</scope>
    <scope>FUNCTION</scope>
    <scope>CATALYTIC ACTIVITY</scope>
    <scope>BIOPHYSICOCHEMICAL PROPERTIES</scope>
    <scope>SUBUNIT</scope>
</reference>
<reference key="10">
    <citation type="journal article" date="2010" name="Biochem. J.">
        <title>Structural insights into the catalytic mechanism of the yeast pyridoxal 5-phosphate synthase Snz1.</title>
        <authorList>
            <person name="Zhang X."/>
            <person name="Teng Y.B."/>
            <person name="Liu J.P."/>
            <person name="He Y.X."/>
            <person name="Zhou K."/>
            <person name="Chen Y."/>
            <person name="Zhou C.Z."/>
        </authorList>
    </citation>
    <scope>X-RAY CRYSTALLOGRAPHY (1.80 ANGSTROMS) OF 15-297 OF APOENZYME AND IN COMPLEXES WITH PYRIDOXAL PHOSPHATE AND GLYCERALDEHYDE 3-PHOSPHATE</scope>
    <scope>CATALYTIC ACTIVITY</scope>
    <scope>MUTAGENESIS OF GLU-116; LYS-117; 136-ARG-ARG-137; LYS-148; ARG-164 AND LYS-240</scope>
    <scope>REACTION MECHANISM</scope>
</reference>
<evidence type="ECO:0000250" key="1">
    <source>
        <dbReference type="UniProtKB" id="O59080"/>
    </source>
</evidence>
<evidence type="ECO:0000269" key="2">
    <source>
    </source>
</evidence>
<evidence type="ECO:0000269" key="3">
    <source>
    </source>
</evidence>
<evidence type="ECO:0000269" key="4">
    <source>
    </source>
</evidence>
<evidence type="ECO:0000269" key="5">
    <source>
    </source>
</evidence>
<evidence type="ECO:0000305" key="6"/>
<evidence type="ECO:0007829" key="7">
    <source>
        <dbReference type="PDB" id="3FEM"/>
    </source>
</evidence>
<evidence type="ECO:0007829" key="8">
    <source>
        <dbReference type="PDB" id="3O06"/>
    </source>
</evidence>
<evidence type="ECO:0007829" key="9">
    <source>
        <dbReference type="PDB" id="3O07"/>
    </source>
</evidence>
<name>SNZ1_YEAST</name>
<sequence>MTGEDFKIKSGLAQMLKGGVIMDVVTPEQAKIAEKSGACAVMALESIPADMRKSGKVCRMSDPKMIKDIMNSVSIPVMAKVRIGHFVEAQIIEALEVDYIDESEVLTPADWTHHIEKDKFKVPFVCGAKDLGEALRRINEGAAMIRTKGEAGTGDVSEAVKHIRRITEEIKACQQLKSEDDIAKVAEEMRVPVSLLKDVLEKGKLPVVNFAAGGVATPADAALLMQLGCDGVFVGSGIFKSSNPVRLATAVVEATTHFDNPSKLLEVSSDLGELMGGVSIESISHASNGVRLSEIGW</sequence>